<gene>
    <name evidence="1" type="primary">whiA</name>
    <name type="ordered locus">SCO1950</name>
    <name type="ORF">SCC54.10c</name>
</gene>
<sequence>MTAAVKSEISQLPVTRTCCRKAEVSAVLRFAGGLHLVSGRIVIEAELDTGNAARRLKRDILEIFGHSSELIVMAPGGLRRGSRFVVRVVAGGDQLARQTGLVDGRGRPIRGLPPQVVSGATCDAEAAWRGAFLAHGSLTEPGRSSSLEVTCPGPEAALALVGAARRLSIPAKAREVRGVDRVVVRDGDAIGALLTRLGAHDSVLAWEERRLRREVRATANRLANFDDANLRRSARAAVAAGARVQRALEILADDVPEHLAAAGRLRMEHKQASLEELGALADPPLTKDAVAGRIRRLLAMADKRASDLGIAGTDANLGEEELADNLVG</sequence>
<evidence type="ECO:0000255" key="1">
    <source>
        <dbReference type="HAMAP-Rule" id="MF_01420"/>
    </source>
</evidence>
<evidence type="ECO:0000269" key="2">
    <source>
    </source>
</evidence>
<evidence type="ECO:0000269" key="3">
    <source>
    </source>
</evidence>
<evidence type="ECO:0000269" key="4">
    <source>
    </source>
</evidence>
<evidence type="ECO:0000305" key="5"/>
<accession>Q9Z515</accession>
<accession>Q9S4Y1</accession>
<proteinExistence type="evidence at protein level"/>
<name>WHIA_STRCO</name>
<feature type="chain" id="PRO_0000376600" description="Probable cell division protein WhiA">
    <location>
        <begin position="1"/>
        <end position="328"/>
    </location>
</feature>
<feature type="DNA-binding region" description="H-T-H motif" evidence="1">
    <location>
        <begin position="273"/>
        <end position="306"/>
    </location>
</feature>
<feature type="mutagenesis site" description="Aerial hyphae have coiled segments and no signs of septation (strain C85)." evidence="2">
    <original>L</original>
    <variation>P</variation>
    <location>
        <position position="160"/>
    </location>
</feature>
<feature type="mutagenesis site" description="Aerial hyphae have coiled segments and no signs of septation (strain C213)." evidence="2">
    <original>L</original>
    <variation>P</variation>
    <location>
        <position position="194"/>
    </location>
</feature>
<organism>
    <name type="scientific">Streptomyces coelicolor (strain ATCC BAA-471 / A3(2) / M145)</name>
    <dbReference type="NCBI Taxonomy" id="100226"/>
    <lineage>
        <taxon>Bacteria</taxon>
        <taxon>Bacillati</taxon>
        <taxon>Actinomycetota</taxon>
        <taxon>Actinomycetes</taxon>
        <taxon>Kitasatosporales</taxon>
        <taxon>Streptomycetaceae</taxon>
        <taxon>Streptomyces</taxon>
        <taxon>Streptomyces albidoflavus group</taxon>
    </lineage>
</organism>
<dbReference type="EMBL" id="AF106003">
    <property type="protein sequence ID" value="AAD42169.1"/>
    <property type="molecule type" value="Genomic_DNA"/>
</dbReference>
<dbReference type="EMBL" id="AL939110">
    <property type="protein sequence ID" value="CAB38140.1"/>
    <property type="status" value="ALT_INIT"/>
    <property type="molecule type" value="Genomic_DNA"/>
</dbReference>
<dbReference type="PIR" id="T36023">
    <property type="entry name" value="T36023"/>
</dbReference>
<dbReference type="RefSeq" id="NP_626214.1">
    <property type="nucleotide sequence ID" value="NC_003888.3"/>
</dbReference>
<dbReference type="SMR" id="Q9Z515"/>
<dbReference type="FunCoup" id="Q9Z515">
    <property type="interactions" value="2"/>
</dbReference>
<dbReference type="STRING" id="100226.gene:17759547"/>
<dbReference type="PaxDb" id="100226-SCO1950"/>
<dbReference type="KEGG" id="sco:SCO1950"/>
<dbReference type="PATRIC" id="fig|100226.15.peg.1976"/>
<dbReference type="eggNOG" id="COG1481">
    <property type="taxonomic scope" value="Bacteria"/>
</dbReference>
<dbReference type="HOGENOM" id="CLU_053282_0_0_11"/>
<dbReference type="InParanoid" id="Q9Z515"/>
<dbReference type="OrthoDB" id="5197218at2"/>
<dbReference type="PhylomeDB" id="Q9Z515"/>
<dbReference type="Proteomes" id="UP000001973">
    <property type="component" value="Chromosome"/>
</dbReference>
<dbReference type="GO" id="GO:0003677">
    <property type="term" value="F:DNA binding"/>
    <property type="evidence" value="ECO:0007669"/>
    <property type="project" value="UniProtKB-UniRule"/>
</dbReference>
<dbReference type="GO" id="GO:0051301">
    <property type="term" value="P:cell division"/>
    <property type="evidence" value="ECO:0007669"/>
    <property type="project" value="UniProtKB-UniRule"/>
</dbReference>
<dbReference type="GO" id="GO:0043937">
    <property type="term" value="P:regulation of sporulation"/>
    <property type="evidence" value="ECO:0000315"/>
    <property type="project" value="UniProtKB"/>
</dbReference>
<dbReference type="FunFam" id="3.10.28.10:FF:000001">
    <property type="entry name" value="Probable cell division protein WhiA"/>
    <property type="match status" value="1"/>
</dbReference>
<dbReference type="Gene3D" id="3.10.28.10">
    <property type="entry name" value="Homing endonucleases"/>
    <property type="match status" value="1"/>
</dbReference>
<dbReference type="HAMAP" id="MF_01420">
    <property type="entry name" value="HTH_type_WhiA"/>
    <property type="match status" value="1"/>
</dbReference>
<dbReference type="InterPro" id="IPR027434">
    <property type="entry name" value="Homing_endonucl"/>
</dbReference>
<dbReference type="InterPro" id="IPR018478">
    <property type="entry name" value="Sporu_reg_WhiA_N_dom"/>
</dbReference>
<dbReference type="InterPro" id="IPR003802">
    <property type="entry name" value="Sporulation_regulator_WhiA"/>
</dbReference>
<dbReference type="InterPro" id="IPR023054">
    <property type="entry name" value="Sporulation_regulator_WhiA_C"/>
</dbReference>
<dbReference type="InterPro" id="IPR039518">
    <property type="entry name" value="WhiA_LAGLIDADG_dom"/>
</dbReference>
<dbReference type="NCBIfam" id="TIGR00647">
    <property type="entry name" value="DNA_bind_WhiA"/>
    <property type="match status" value="1"/>
</dbReference>
<dbReference type="PANTHER" id="PTHR37307">
    <property type="entry name" value="CELL DIVISION PROTEIN WHIA-RELATED"/>
    <property type="match status" value="1"/>
</dbReference>
<dbReference type="PANTHER" id="PTHR37307:SF1">
    <property type="entry name" value="CELL DIVISION PROTEIN WHIA-RELATED"/>
    <property type="match status" value="1"/>
</dbReference>
<dbReference type="Pfam" id="PF02650">
    <property type="entry name" value="HTH_WhiA"/>
    <property type="match status" value="1"/>
</dbReference>
<dbReference type="Pfam" id="PF14527">
    <property type="entry name" value="LAGLIDADG_WhiA"/>
    <property type="match status" value="1"/>
</dbReference>
<dbReference type="Pfam" id="PF10298">
    <property type="entry name" value="WhiA_N"/>
    <property type="match status" value="1"/>
</dbReference>
<reference key="1">
    <citation type="journal article" date="2000" name="J. Bacteriol.">
        <title>WhiA, a protein of unknown function conserved among gram-positive bacteria, is essential for sporulation in Streptomyces coelicolor A3(2).</title>
        <authorList>
            <person name="Ainsa J.A."/>
            <person name="Ryding N.J."/>
            <person name="Hartley N."/>
            <person name="Findlay K.C."/>
            <person name="Bruton C.J."/>
            <person name="Chater K.F."/>
        </authorList>
    </citation>
    <scope>NUCLEOTIDE SEQUENCE [GENOMIC DNA]</scope>
    <scope>MUTAGENESIS OF LEU-160 AND LEU-194</scope>
    <scope>DEVELOPMENTAL STAGE</scope>
    <scope>POSSIBLE OPERON STRUCTURE</scope>
    <scope>DISRUPTION PHENOTYPE</scope>
    <scope>INDUCTION</scope>
    <source>
        <strain>ATCC BAA-471 / A3(2) / M145</strain>
    </source>
</reference>
<reference key="2">
    <citation type="journal article" date="2002" name="Nature">
        <title>Complete genome sequence of the model actinomycete Streptomyces coelicolor A3(2).</title>
        <authorList>
            <person name="Bentley S.D."/>
            <person name="Chater K.F."/>
            <person name="Cerdeno-Tarraga A.-M."/>
            <person name="Challis G.L."/>
            <person name="Thomson N.R."/>
            <person name="James K.D."/>
            <person name="Harris D.E."/>
            <person name="Quail M.A."/>
            <person name="Kieser H."/>
            <person name="Harper D."/>
            <person name="Bateman A."/>
            <person name="Brown S."/>
            <person name="Chandra G."/>
            <person name="Chen C.W."/>
            <person name="Collins M."/>
            <person name="Cronin A."/>
            <person name="Fraser A."/>
            <person name="Goble A."/>
            <person name="Hidalgo J."/>
            <person name="Hornsby T."/>
            <person name="Howarth S."/>
            <person name="Huang C.-H."/>
            <person name="Kieser T."/>
            <person name="Larke L."/>
            <person name="Murphy L.D."/>
            <person name="Oliver K."/>
            <person name="O'Neil S."/>
            <person name="Rabbinowitsch E."/>
            <person name="Rajandream M.A."/>
            <person name="Rutherford K.M."/>
            <person name="Rutter S."/>
            <person name="Seeger K."/>
            <person name="Saunders D."/>
            <person name="Sharp S."/>
            <person name="Squares R."/>
            <person name="Squares S."/>
            <person name="Taylor K."/>
            <person name="Warren T."/>
            <person name="Wietzorrek A."/>
            <person name="Woodward J.R."/>
            <person name="Barrell B.G."/>
            <person name="Parkhill J."/>
            <person name="Hopwood D.A."/>
        </authorList>
    </citation>
    <scope>NUCLEOTIDE SEQUENCE [LARGE SCALE GENOMIC DNA]</scope>
    <source>
        <strain>ATCC BAA-471 / A3(2) / M145</strain>
    </source>
</reference>
<reference key="3">
    <citation type="journal article" date="2006" name="J. Bacteriol.">
        <title>Developmental control of a parAB promoter leads to formation of sporulation-associated ParB complexes in Streptomyces coelicolor.</title>
        <authorList>
            <person name="Jakimowicz D."/>
            <person name="Mouz S."/>
            <person name="Zakrzewska-Czerwinska J."/>
            <person name="Chater K.F."/>
        </authorList>
    </citation>
    <scope>FUNCTION IN PARB EXPRESSION</scope>
    <scope>REGULATION MODEL</scope>
    <source>
        <strain>ATCC BAA-471 / A3(2) / M145</strain>
    </source>
</reference>
<reference key="4">
    <citation type="journal article" date="2007" name="Cell Cycle">
        <title>Bacterial DUF199/COG1481 proteins including sporulation regulator WhiA are distant homologs of LAGLIDADG homing endonucleases that retained only DNA binding.</title>
        <authorList>
            <person name="Knizewski L."/>
            <person name="Ginalski K."/>
        </authorList>
    </citation>
    <scope>SUGGESTION OF DNA-BINDING</scope>
</reference>
<reference key="5">
    <citation type="journal article" date="2006" name="FEMS Microbiol. Rev.">
        <title>The evolution of development in Streptomyces analysed by genome comparisons.</title>
        <authorList>
            <person name="Chater K.F."/>
            <person name="Chandra G."/>
        </authorList>
    </citation>
    <scope>REVIEW</scope>
</reference>
<reference key="6">
    <citation type="journal article" date="2011" name="Sci. Rep.">
        <title>DNA recognition and transcriptional regulation by the WhiA sporulation factor.</title>
        <authorList>
            <person name="Kaiser B.K."/>
            <person name="Stoddard B.L."/>
        </authorList>
    </citation>
    <scope>FUNCTION</scope>
    <scope>DNA-BINDING</scope>
    <scope>SUBUNIT</scope>
    <scope>INDUCTION</scope>
    <scope>DOMAIN</scope>
</reference>
<keyword id="KW-0010">Activator</keyword>
<keyword id="KW-0131">Cell cycle</keyword>
<keyword id="KW-0132">Cell division</keyword>
<keyword id="KW-0238">DNA-binding</keyword>
<keyword id="KW-1185">Reference proteome</keyword>
<keyword id="KW-0678">Repressor</keyword>
<keyword id="KW-0804">Transcription</keyword>
<keyword id="KW-0805">Transcription regulation</keyword>
<protein>
    <recommendedName>
        <fullName evidence="1 5">Probable cell division protein WhiA</fullName>
    </recommendedName>
</protein>
<comment type="function">
    <text evidence="1 3 4">Involved in cell division and chromosome segregation (By similarity). Involved in sporulation (PubMed:16484182, PubMed:22355671). May coordinate the cessation of aerial hyphae growth and subsequent chromosome segregation and/or septation (PubMed:16484182, PubMed:22355671). Required for expression of the ParB partioning protein during sporogenesis. Activates its own transcription and represses WhiB (PubMed:16484182). Binds with low affinity to its own promoter and to the Parp2 sporulation-specific promoter. Also binds directly to the RNA polymerase sigma factor WhiG, leading to inhibition of WhiG-dependent transcription in a dose-dependent manner (PubMed:22355671).</text>
</comment>
<comment type="subunit">
    <text evidence="4">Monomer in solution.</text>
</comment>
<comment type="developmental stage">
    <text evidence="2">Induced when aerial mycelia start forming, expression is maximal when sporulation starts.</text>
</comment>
<comment type="induction">
    <text evidence="2 4">Transcribed both as part of an operon and from its own specific promoter during sporulation (PubMed:10986251). Transcription is stimulated by WhiG (PubMed:22355671).</text>
</comment>
<comment type="domain">
    <text evidence="4">DNA binding is primarily driven by the H-T-H domain, but requires full-length protein for maximum affinity.</text>
</comment>
<comment type="disruption phenotype">
    <text evidence="2">Cells lacking this gene do not sporulate; instead of aerial hyphae of unicellular spores, long slightly coiled unseptated stalks form.</text>
</comment>
<comment type="similarity">
    <text evidence="1">Belongs to the WhiA family.</text>
</comment>
<comment type="caution">
    <text evidence="5">There may be second mutations present in each of mutant strains C58 and C213.</text>
</comment>
<comment type="sequence caution" evidence="5">
    <conflict type="erroneous initiation">
        <sequence resource="EMBL-CDS" id="CAB38140"/>
    </conflict>
</comment>